<feature type="chain" id="PRO_1000085191" description="Chaperone protein DnaJ">
    <location>
        <begin position="1"/>
        <end position="382"/>
    </location>
</feature>
<feature type="domain" description="J" evidence="1">
    <location>
        <begin position="5"/>
        <end position="70"/>
    </location>
</feature>
<feature type="repeat" description="CXXCXGXG motif">
    <location>
        <begin position="152"/>
        <end position="159"/>
    </location>
</feature>
<feature type="repeat" description="CXXCXGXG motif">
    <location>
        <begin position="169"/>
        <end position="176"/>
    </location>
</feature>
<feature type="repeat" description="CXXCXGXG motif">
    <location>
        <begin position="191"/>
        <end position="198"/>
    </location>
</feature>
<feature type="repeat" description="CXXCXGXG motif">
    <location>
        <begin position="205"/>
        <end position="212"/>
    </location>
</feature>
<feature type="zinc finger region" description="CR-type" evidence="1">
    <location>
        <begin position="139"/>
        <end position="217"/>
    </location>
</feature>
<feature type="binding site" evidence="1">
    <location>
        <position position="152"/>
    </location>
    <ligand>
        <name>Zn(2+)</name>
        <dbReference type="ChEBI" id="CHEBI:29105"/>
        <label>1</label>
    </ligand>
</feature>
<feature type="binding site" evidence="1">
    <location>
        <position position="155"/>
    </location>
    <ligand>
        <name>Zn(2+)</name>
        <dbReference type="ChEBI" id="CHEBI:29105"/>
        <label>1</label>
    </ligand>
</feature>
<feature type="binding site" evidence="1">
    <location>
        <position position="169"/>
    </location>
    <ligand>
        <name>Zn(2+)</name>
        <dbReference type="ChEBI" id="CHEBI:29105"/>
        <label>2</label>
    </ligand>
</feature>
<feature type="binding site" evidence="1">
    <location>
        <position position="172"/>
    </location>
    <ligand>
        <name>Zn(2+)</name>
        <dbReference type="ChEBI" id="CHEBI:29105"/>
        <label>2</label>
    </ligand>
</feature>
<feature type="binding site" evidence="1">
    <location>
        <position position="191"/>
    </location>
    <ligand>
        <name>Zn(2+)</name>
        <dbReference type="ChEBI" id="CHEBI:29105"/>
        <label>2</label>
    </ligand>
</feature>
<feature type="binding site" evidence="1">
    <location>
        <position position="194"/>
    </location>
    <ligand>
        <name>Zn(2+)</name>
        <dbReference type="ChEBI" id="CHEBI:29105"/>
        <label>2</label>
    </ligand>
</feature>
<feature type="binding site" evidence="1">
    <location>
        <position position="205"/>
    </location>
    <ligand>
        <name>Zn(2+)</name>
        <dbReference type="ChEBI" id="CHEBI:29105"/>
        <label>1</label>
    </ligand>
</feature>
<feature type="binding site" evidence="1">
    <location>
        <position position="208"/>
    </location>
    <ligand>
        <name>Zn(2+)</name>
        <dbReference type="ChEBI" id="CHEBI:29105"/>
        <label>1</label>
    </ligand>
</feature>
<sequence>MSKSDYYELLGVSKNATSEEIKKAYRKMALKYHPDTNPGNKEAEEKFKELSEAYDVLIDQDKRAAYDKYGHNAFDGAAGRGGFDFNSGFSGDFSDIFNDLFGGGFGSRGGRGSSRRSEGAAGSDLRFDVEITLEDSFNGKKVPISYVTYVKCSSCSGSGSEGSAKSVQCNTCHGAGSVRTQQGFFTIERTCHVCNGEGEIIQNKCKKCSGSGRVRDEVNLLVTIPKGIESGNKIRLNGKGEAGYRGARSGDLYVYSNIQKHKFFTRSGPDLYCTVPIKMTLAALGGHIEMPSIDGTWTKVKVPEGSQSGDKLRLKEKGMPVINSSKRGDMYIQITVETPVKLTKKQKELLQKFDDEPNVDCNPQSTGFFQKVKSFWKDIRSN</sequence>
<evidence type="ECO:0000255" key="1">
    <source>
        <dbReference type="HAMAP-Rule" id="MF_01152"/>
    </source>
</evidence>
<comment type="function">
    <text evidence="1">Participates actively in the response to hyperosmotic and heat shock by preventing the aggregation of stress-denatured proteins and by disaggregating proteins, also in an autonomous, DnaK-independent fashion. Unfolded proteins bind initially to DnaJ; upon interaction with the DnaJ-bound protein, DnaK hydrolyzes its bound ATP, resulting in the formation of a stable complex. GrpE releases ADP from DnaK; ATP binding to DnaK triggers the release of the substrate protein, thus completing the reaction cycle. Several rounds of ATP-dependent interactions between DnaJ, DnaK and GrpE are required for fully efficient folding. Also involved, together with DnaK and GrpE, in the DNA replication of plasmids through activation of initiation proteins.</text>
</comment>
<comment type="cofactor">
    <cofactor evidence="1">
        <name>Zn(2+)</name>
        <dbReference type="ChEBI" id="CHEBI:29105"/>
    </cofactor>
    <text evidence="1">Binds 2 Zn(2+) ions per monomer.</text>
</comment>
<comment type="subunit">
    <text evidence="1">Homodimer.</text>
</comment>
<comment type="subcellular location">
    <subcellularLocation>
        <location evidence="1">Cytoplasm</location>
    </subcellularLocation>
</comment>
<comment type="domain">
    <text evidence="1">The J domain is necessary and sufficient to stimulate DnaK ATPase activity. Zinc center 1 plays an important role in the autonomous, DnaK-independent chaperone activity of DnaJ. Zinc center 2 is essential for interaction with DnaK and for DnaJ activity.</text>
</comment>
<comment type="similarity">
    <text evidence="1">Belongs to the DnaJ family.</text>
</comment>
<keyword id="KW-0143">Chaperone</keyword>
<keyword id="KW-0963">Cytoplasm</keyword>
<keyword id="KW-0235">DNA replication</keyword>
<keyword id="KW-0479">Metal-binding</keyword>
<keyword id="KW-0677">Repeat</keyword>
<keyword id="KW-0346">Stress response</keyword>
<keyword id="KW-0862">Zinc</keyword>
<keyword id="KW-0863">Zinc-finger</keyword>
<proteinExistence type="inferred from homology"/>
<gene>
    <name evidence="1" type="primary">dnaJ</name>
    <name type="ordered locus">Ecaj_0005</name>
</gene>
<name>DNAJ_EHRCJ</name>
<reference key="1">
    <citation type="journal article" date="2006" name="J. Bacteriol.">
        <title>The genome of the obligately intracellular bacterium Ehrlichia canis reveals themes of complex membrane structure and immune evasion strategies.</title>
        <authorList>
            <person name="Mavromatis K."/>
            <person name="Doyle C.K."/>
            <person name="Lykidis A."/>
            <person name="Ivanova N."/>
            <person name="Francino M.P."/>
            <person name="Chain P."/>
            <person name="Shin M."/>
            <person name="Malfatti S."/>
            <person name="Larimer F."/>
            <person name="Copeland A."/>
            <person name="Detter J.C."/>
            <person name="Land M."/>
            <person name="Richardson P.M."/>
            <person name="Yu X.J."/>
            <person name="Walker D.H."/>
            <person name="McBride J.W."/>
            <person name="Kyrpides N.C."/>
        </authorList>
    </citation>
    <scope>NUCLEOTIDE SEQUENCE [LARGE SCALE GENOMIC DNA]</scope>
    <source>
        <strain>Jake</strain>
    </source>
</reference>
<protein>
    <recommendedName>
        <fullName evidence="1">Chaperone protein DnaJ</fullName>
    </recommendedName>
</protein>
<organism>
    <name type="scientific">Ehrlichia canis (strain Jake)</name>
    <dbReference type="NCBI Taxonomy" id="269484"/>
    <lineage>
        <taxon>Bacteria</taxon>
        <taxon>Pseudomonadati</taxon>
        <taxon>Pseudomonadota</taxon>
        <taxon>Alphaproteobacteria</taxon>
        <taxon>Rickettsiales</taxon>
        <taxon>Anaplasmataceae</taxon>
        <taxon>Ehrlichia</taxon>
    </lineage>
</organism>
<dbReference type="EMBL" id="CP000107">
    <property type="protein sequence ID" value="AAZ68056.1"/>
    <property type="molecule type" value="Genomic_DNA"/>
</dbReference>
<dbReference type="RefSeq" id="WP_011304134.1">
    <property type="nucleotide sequence ID" value="NC_007354.1"/>
</dbReference>
<dbReference type="SMR" id="Q3YT99"/>
<dbReference type="FunCoup" id="Q3YT99">
    <property type="interactions" value="350"/>
</dbReference>
<dbReference type="STRING" id="269484.Ecaj_0005"/>
<dbReference type="KEGG" id="ecn:Ecaj_0005"/>
<dbReference type="eggNOG" id="COG0484">
    <property type="taxonomic scope" value="Bacteria"/>
</dbReference>
<dbReference type="HOGENOM" id="CLU_017633_0_7_5"/>
<dbReference type="InParanoid" id="Q3YT99"/>
<dbReference type="Proteomes" id="UP000000435">
    <property type="component" value="Chromosome"/>
</dbReference>
<dbReference type="GO" id="GO:0005737">
    <property type="term" value="C:cytoplasm"/>
    <property type="evidence" value="ECO:0007669"/>
    <property type="project" value="UniProtKB-SubCell"/>
</dbReference>
<dbReference type="GO" id="GO:0005524">
    <property type="term" value="F:ATP binding"/>
    <property type="evidence" value="ECO:0007669"/>
    <property type="project" value="InterPro"/>
</dbReference>
<dbReference type="GO" id="GO:0031072">
    <property type="term" value="F:heat shock protein binding"/>
    <property type="evidence" value="ECO:0007669"/>
    <property type="project" value="InterPro"/>
</dbReference>
<dbReference type="GO" id="GO:0051082">
    <property type="term" value="F:unfolded protein binding"/>
    <property type="evidence" value="ECO:0007669"/>
    <property type="project" value="UniProtKB-UniRule"/>
</dbReference>
<dbReference type="GO" id="GO:0008270">
    <property type="term" value="F:zinc ion binding"/>
    <property type="evidence" value="ECO:0007669"/>
    <property type="project" value="UniProtKB-UniRule"/>
</dbReference>
<dbReference type="GO" id="GO:0051085">
    <property type="term" value="P:chaperone cofactor-dependent protein refolding"/>
    <property type="evidence" value="ECO:0007669"/>
    <property type="project" value="TreeGrafter"/>
</dbReference>
<dbReference type="GO" id="GO:0006260">
    <property type="term" value="P:DNA replication"/>
    <property type="evidence" value="ECO:0007669"/>
    <property type="project" value="UniProtKB-KW"/>
</dbReference>
<dbReference type="GO" id="GO:0042026">
    <property type="term" value="P:protein refolding"/>
    <property type="evidence" value="ECO:0007669"/>
    <property type="project" value="TreeGrafter"/>
</dbReference>
<dbReference type="GO" id="GO:0009408">
    <property type="term" value="P:response to heat"/>
    <property type="evidence" value="ECO:0007669"/>
    <property type="project" value="InterPro"/>
</dbReference>
<dbReference type="CDD" id="cd06257">
    <property type="entry name" value="DnaJ"/>
    <property type="match status" value="1"/>
</dbReference>
<dbReference type="CDD" id="cd10747">
    <property type="entry name" value="DnaJ_C"/>
    <property type="match status" value="1"/>
</dbReference>
<dbReference type="CDD" id="cd10719">
    <property type="entry name" value="DnaJ_zf"/>
    <property type="match status" value="1"/>
</dbReference>
<dbReference type="FunFam" id="1.10.287.110:FF:000034">
    <property type="entry name" value="Chaperone protein DnaJ"/>
    <property type="match status" value="1"/>
</dbReference>
<dbReference type="FunFam" id="2.10.230.10:FF:000002">
    <property type="entry name" value="Molecular chaperone DnaJ"/>
    <property type="match status" value="1"/>
</dbReference>
<dbReference type="FunFam" id="2.60.260.20:FF:000004">
    <property type="entry name" value="Molecular chaperone DnaJ"/>
    <property type="match status" value="1"/>
</dbReference>
<dbReference type="Gene3D" id="1.10.287.110">
    <property type="entry name" value="DnaJ domain"/>
    <property type="match status" value="1"/>
</dbReference>
<dbReference type="Gene3D" id="2.10.230.10">
    <property type="entry name" value="Heat shock protein DnaJ, cysteine-rich domain"/>
    <property type="match status" value="1"/>
</dbReference>
<dbReference type="Gene3D" id="2.60.260.20">
    <property type="entry name" value="Urease metallochaperone UreE, N-terminal domain"/>
    <property type="match status" value="2"/>
</dbReference>
<dbReference type="HAMAP" id="MF_01152">
    <property type="entry name" value="DnaJ"/>
    <property type="match status" value="1"/>
</dbReference>
<dbReference type="InterPro" id="IPR012724">
    <property type="entry name" value="DnaJ"/>
</dbReference>
<dbReference type="InterPro" id="IPR002939">
    <property type="entry name" value="DnaJ_C"/>
</dbReference>
<dbReference type="InterPro" id="IPR001623">
    <property type="entry name" value="DnaJ_domain"/>
</dbReference>
<dbReference type="InterPro" id="IPR018253">
    <property type="entry name" value="DnaJ_domain_CS"/>
</dbReference>
<dbReference type="InterPro" id="IPR008971">
    <property type="entry name" value="HSP40/DnaJ_pept-bd"/>
</dbReference>
<dbReference type="InterPro" id="IPR001305">
    <property type="entry name" value="HSP_DnaJ_Cys-rich_dom"/>
</dbReference>
<dbReference type="InterPro" id="IPR036410">
    <property type="entry name" value="HSP_DnaJ_Cys-rich_dom_sf"/>
</dbReference>
<dbReference type="InterPro" id="IPR036869">
    <property type="entry name" value="J_dom_sf"/>
</dbReference>
<dbReference type="NCBIfam" id="TIGR02349">
    <property type="entry name" value="DnaJ_bact"/>
    <property type="match status" value="1"/>
</dbReference>
<dbReference type="NCBIfam" id="NF008035">
    <property type="entry name" value="PRK10767.1"/>
    <property type="match status" value="1"/>
</dbReference>
<dbReference type="PANTHER" id="PTHR43096:SF48">
    <property type="entry name" value="CHAPERONE PROTEIN DNAJ"/>
    <property type="match status" value="1"/>
</dbReference>
<dbReference type="PANTHER" id="PTHR43096">
    <property type="entry name" value="DNAJ HOMOLOG 1, MITOCHONDRIAL-RELATED"/>
    <property type="match status" value="1"/>
</dbReference>
<dbReference type="Pfam" id="PF00226">
    <property type="entry name" value="DnaJ"/>
    <property type="match status" value="1"/>
</dbReference>
<dbReference type="Pfam" id="PF01556">
    <property type="entry name" value="DnaJ_C"/>
    <property type="match status" value="1"/>
</dbReference>
<dbReference type="Pfam" id="PF00684">
    <property type="entry name" value="DnaJ_CXXCXGXG"/>
    <property type="match status" value="1"/>
</dbReference>
<dbReference type="PRINTS" id="PR00625">
    <property type="entry name" value="JDOMAIN"/>
</dbReference>
<dbReference type="SMART" id="SM00271">
    <property type="entry name" value="DnaJ"/>
    <property type="match status" value="1"/>
</dbReference>
<dbReference type="SUPFAM" id="SSF46565">
    <property type="entry name" value="Chaperone J-domain"/>
    <property type="match status" value="1"/>
</dbReference>
<dbReference type="SUPFAM" id="SSF57938">
    <property type="entry name" value="DnaJ/Hsp40 cysteine-rich domain"/>
    <property type="match status" value="1"/>
</dbReference>
<dbReference type="SUPFAM" id="SSF49493">
    <property type="entry name" value="HSP40/DnaJ peptide-binding domain"/>
    <property type="match status" value="2"/>
</dbReference>
<dbReference type="PROSITE" id="PS00636">
    <property type="entry name" value="DNAJ_1"/>
    <property type="match status" value="1"/>
</dbReference>
<dbReference type="PROSITE" id="PS50076">
    <property type="entry name" value="DNAJ_2"/>
    <property type="match status" value="1"/>
</dbReference>
<dbReference type="PROSITE" id="PS51188">
    <property type="entry name" value="ZF_CR"/>
    <property type="match status" value="1"/>
</dbReference>
<accession>Q3YT99</accession>